<comment type="function">
    <text>May play a role in signal transduction pathways that involve calcium as a second messenger.</text>
</comment>
<comment type="catalytic activity">
    <reaction>
        <text>L-seryl-[protein] + ATP = O-phospho-L-seryl-[protein] + ADP + H(+)</text>
        <dbReference type="Rhea" id="RHEA:17989"/>
        <dbReference type="Rhea" id="RHEA-COMP:9863"/>
        <dbReference type="Rhea" id="RHEA-COMP:11604"/>
        <dbReference type="ChEBI" id="CHEBI:15378"/>
        <dbReference type="ChEBI" id="CHEBI:29999"/>
        <dbReference type="ChEBI" id="CHEBI:30616"/>
        <dbReference type="ChEBI" id="CHEBI:83421"/>
        <dbReference type="ChEBI" id="CHEBI:456216"/>
        <dbReference type="EC" id="2.7.11.1"/>
    </reaction>
</comment>
<comment type="catalytic activity">
    <reaction>
        <text>L-threonyl-[protein] + ATP = O-phospho-L-threonyl-[protein] + ADP + H(+)</text>
        <dbReference type="Rhea" id="RHEA:46608"/>
        <dbReference type="Rhea" id="RHEA-COMP:11060"/>
        <dbReference type="Rhea" id="RHEA-COMP:11605"/>
        <dbReference type="ChEBI" id="CHEBI:15378"/>
        <dbReference type="ChEBI" id="CHEBI:30013"/>
        <dbReference type="ChEBI" id="CHEBI:30616"/>
        <dbReference type="ChEBI" id="CHEBI:61977"/>
        <dbReference type="ChEBI" id="CHEBI:456216"/>
        <dbReference type="EC" id="2.7.11.1"/>
    </reaction>
</comment>
<comment type="activity regulation">
    <text evidence="1">Activated by calcium. Autophosphorylation may play an important role in the regulation of the kinase activity (By similarity).</text>
</comment>
<comment type="domain">
    <text evidence="1">There are 3 contiguous domains conserved in the CDPK subfamily: a kinase domain, an autoinhibitory (junction) domain and a calmodulin-like domain. The autoinhibitory domain (329-359) inactivates kinase activity under calcium-free conditions (By similarity).</text>
</comment>
<comment type="similarity">
    <text evidence="2">Belongs to the protein kinase superfamily. Ser/Thr protein kinase family. CDPK subfamily.</text>
</comment>
<dbReference type="EC" id="2.7.11.1"/>
<dbReference type="EMBL" id="U28376">
    <property type="protein sequence ID" value="AAA69507.1"/>
    <property type="molecule type" value="mRNA"/>
</dbReference>
<dbReference type="PIR" id="T02259">
    <property type="entry name" value="T02259"/>
</dbReference>
<dbReference type="SMR" id="P49101"/>
<dbReference type="STRING" id="4577.P49101"/>
<dbReference type="PaxDb" id="4577-GRMZM2G168706_P01"/>
<dbReference type="MaizeGDB" id="56895"/>
<dbReference type="eggNOG" id="KOG0032">
    <property type="taxonomic scope" value="Eukaryota"/>
</dbReference>
<dbReference type="InParanoid" id="P49101"/>
<dbReference type="BRENDA" id="2.7.11.1">
    <property type="organism ID" value="6752"/>
</dbReference>
<dbReference type="Proteomes" id="UP000007305">
    <property type="component" value="Unplaced"/>
</dbReference>
<dbReference type="ExpressionAtlas" id="P49101">
    <property type="expression patterns" value="baseline and differential"/>
</dbReference>
<dbReference type="GO" id="GO:0005737">
    <property type="term" value="C:cytoplasm"/>
    <property type="evidence" value="ECO:0000318"/>
    <property type="project" value="GO_Central"/>
</dbReference>
<dbReference type="GO" id="GO:0005634">
    <property type="term" value="C:nucleus"/>
    <property type="evidence" value="ECO:0000318"/>
    <property type="project" value="GO_Central"/>
</dbReference>
<dbReference type="GO" id="GO:0005524">
    <property type="term" value="F:ATP binding"/>
    <property type="evidence" value="ECO:0007669"/>
    <property type="project" value="UniProtKB-KW"/>
</dbReference>
<dbReference type="GO" id="GO:0005509">
    <property type="term" value="F:calcium ion binding"/>
    <property type="evidence" value="ECO:0007669"/>
    <property type="project" value="InterPro"/>
</dbReference>
<dbReference type="GO" id="GO:0009931">
    <property type="term" value="F:calcium-dependent protein serine/threonine kinase activity"/>
    <property type="evidence" value="ECO:0000318"/>
    <property type="project" value="GO_Central"/>
</dbReference>
<dbReference type="GO" id="GO:0004683">
    <property type="term" value="F:calcium/calmodulin-dependent protein kinase activity"/>
    <property type="evidence" value="ECO:0000318"/>
    <property type="project" value="GO_Central"/>
</dbReference>
<dbReference type="GO" id="GO:0005516">
    <property type="term" value="F:calmodulin binding"/>
    <property type="evidence" value="ECO:0000318"/>
    <property type="project" value="GO_Central"/>
</dbReference>
<dbReference type="GO" id="GO:0106310">
    <property type="term" value="F:protein serine kinase activity"/>
    <property type="evidence" value="ECO:0007669"/>
    <property type="project" value="RHEA"/>
</dbReference>
<dbReference type="GO" id="GO:0035556">
    <property type="term" value="P:intracellular signal transduction"/>
    <property type="evidence" value="ECO:0000318"/>
    <property type="project" value="GO_Central"/>
</dbReference>
<dbReference type="CDD" id="cd05117">
    <property type="entry name" value="STKc_CAMK"/>
    <property type="match status" value="1"/>
</dbReference>
<dbReference type="FunFam" id="1.10.238.10:FF:000015">
    <property type="entry name" value="Calcium-dependent protein kinase 1"/>
    <property type="match status" value="1"/>
</dbReference>
<dbReference type="FunFam" id="3.30.200.20:FF:000004">
    <property type="entry name" value="Calcium-dependent protein kinase 1"/>
    <property type="match status" value="1"/>
</dbReference>
<dbReference type="FunFam" id="1.10.510.10:FF:000056">
    <property type="entry name" value="calcium-dependent protein kinase 1"/>
    <property type="match status" value="1"/>
</dbReference>
<dbReference type="Gene3D" id="1.10.238.10">
    <property type="entry name" value="EF-hand"/>
    <property type="match status" value="2"/>
</dbReference>
<dbReference type="Gene3D" id="3.30.200.20">
    <property type="entry name" value="Phosphorylase Kinase, domain 1"/>
    <property type="match status" value="1"/>
</dbReference>
<dbReference type="Gene3D" id="1.10.510.10">
    <property type="entry name" value="Transferase(Phosphotransferase) domain 1"/>
    <property type="match status" value="1"/>
</dbReference>
<dbReference type="InterPro" id="IPR050205">
    <property type="entry name" value="CDPK_Ser/Thr_kinases"/>
</dbReference>
<dbReference type="InterPro" id="IPR011992">
    <property type="entry name" value="EF-hand-dom_pair"/>
</dbReference>
<dbReference type="InterPro" id="IPR018247">
    <property type="entry name" value="EF_Hand_1_Ca_BS"/>
</dbReference>
<dbReference type="InterPro" id="IPR002048">
    <property type="entry name" value="EF_hand_dom"/>
</dbReference>
<dbReference type="InterPro" id="IPR011009">
    <property type="entry name" value="Kinase-like_dom_sf"/>
</dbReference>
<dbReference type="InterPro" id="IPR000719">
    <property type="entry name" value="Prot_kinase_dom"/>
</dbReference>
<dbReference type="InterPro" id="IPR017441">
    <property type="entry name" value="Protein_kinase_ATP_BS"/>
</dbReference>
<dbReference type="InterPro" id="IPR008271">
    <property type="entry name" value="Ser/Thr_kinase_AS"/>
</dbReference>
<dbReference type="PANTHER" id="PTHR24349">
    <property type="entry name" value="SERINE/THREONINE-PROTEIN KINASE"/>
    <property type="match status" value="1"/>
</dbReference>
<dbReference type="Pfam" id="PF13499">
    <property type="entry name" value="EF-hand_7"/>
    <property type="match status" value="2"/>
</dbReference>
<dbReference type="Pfam" id="PF00069">
    <property type="entry name" value="Pkinase"/>
    <property type="match status" value="1"/>
</dbReference>
<dbReference type="SMART" id="SM00054">
    <property type="entry name" value="EFh"/>
    <property type="match status" value="4"/>
</dbReference>
<dbReference type="SMART" id="SM00220">
    <property type="entry name" value="S_TKc"/>
    <property type="match status" value="1"/>
</dbReference>
<dbReference type="SUPFAM" id="SSF47473">
    <property type="entry name" value="EF-hand"/>
    <property type="match status" value="1"/>
</dbReference>
<dbReference type="SUPFAM" id="SSF56112">
    <property type="entry name" value="Protein kinase-like (PK-like)"/>
    <property type="match status" value="1"/>
</dbReference>
<dbReference type="PROSITE" id="PS00018">
    <property type="entry name" value="EF_HAND_1"/>
    <property type="match status" value="4"/>
</dbReference>
<dbReference type="PROSITE" id="PS50222">
    <property type="entry name" value="EF_HAND_2"/>
    <property type="match status" value="4"/>
</dbReference>
<dbReference type="PROSITE" id="PS00107">
    <property type="entry name" value="PROTEIN_KINASE_ATP"/>
    <property type="match status" value="1"/>
</dbReference>
<dbReference type="PROSITE" id="PS50011">
    <property type="entry name" value="PROTEIN_KINASE_DOM"/>
    <property type="match status" value="1"/>
</dbReference>
<dbReference type="PROSITE" id="PS00108">
    <property type="entry name" value="PROTEIN_KINASE_ST"/>
    <property type="match status" value="1"/>
</dbReference>
<feature type="chain" id="PRO_0000085829" description="Calcium-dependent protein kinase 2">
    <location>
        <begin position="1"/>
        <end position="513"/>
    </location>
</feature>
<feature type="domain" description="Protein kinase" evidence="2">
    <location>
        <begin position="65"/>
        <end position="323"/>
    </location>
</feature>
<feature type="domain" description="EF-hand 1" evidence="3">
    <location>
        <begin position="366"/>
        <end position="401"/>
    </location>
</feature>
<feature type="domain" description="EF-hand 2" evidence="3">
    <location>
        <begin position="402"/>
        <end position="437"/>
    </location>
</feature>
<feature type="domain" description="EF-hand 3" evidence="3">
    <location>
        <begin position="438"/>
        <end position="473"/>
    </location>
</feature>
<feature type="domain" description="EF-hand 4" evidence="3">
    <location>
        <begin position="478"/>
        <end position="508"/>
    </location>
</feature>
<feature type="region of interest" description="Autoinhibitory domain" evidence="1">
    <location>
        <begin position="329"/>
        <end position="359"/>
    </location>
</feature>
<feature type="active site" description="Proton acceptor" evidence="2 4">
    <location>
        <position position="189"/>
    </location>
</feature>
<feature type="binding site" evidence="2">
    <location>
        <begin position="71"/>
        <end position="79"/>
    </location>
    <ligand>
        <name>ATP</name>
        <dbReference type="ChEBI" id="CHEBI:30616"/>
    </ligand>
</feature>
<feature type="binding site" evidence="2">
    <location>
        <position position="94"/>
    </location>
    <ligand>
        <name>ATP</name>
        <dbReference type="ChEBI" id="CHEBI:30616"/>
    </ligand>
</feature>
<feature type="binding site" evidence="3">
    <location>
        <position position="379"/>
    </location>
    <ligand>
        <name>Ca(2+)</name>
        <dbReference type="ChEBI" id="CHEBI:29108"/>
        <label>1</label>
    </ligand>
</feature>
<feature type="binding site" evidence="3">
    <location>
        <position position="381"/>
    </location>
    <ligand>
        <name>Ca(2+)</name>
        <dbReference type="ChEBI" id="CHEBI:29108"/>
        <label>1</label>
    </ligand>
</feature>
<feature type="binding site" evidence="3">
    <location>
        <position position="383"/>
    </location>
    <ligand>
        <name>Ca(2+)</name>
        <dbReference type="ChEBI" id="CHEBI:29108"/>
        <label>1</label>
    </ligand>
</feature>
<feature type="binding site" evidence="3">
    <location>
        <position position="385"/>
    </location>
    <ligand>
        <name>Ca(2+)</name>
        <dbReference type="ChEBI" id="CHEBI:29108"/>
        <label>1</label>
    </ligand>
</feature>
<feature type="binding site" evidence="3">
    <location>
        <position position="390"/>
    </location>
    <ligand>
        <name>Ca(2+)</name>
        <dbReference type="ChEBI" id="CHEBI:29108"/>
        <label>1</label>
    </ligand>
</feature>
<feature type="binding site" evidence="3">
    <location>
        <position position="415"/>
    </location>
    <ligand>
        <name>Ca(2+)</name>
        <dbReference type="ChEBI" id="CHEBI:29108"/>
        <label>2</label>
    </ligand>
</feature>
<feature type="binding site" evidence="3">
    <location>
        <position position="417"/>
    </location>
    <ligand>
        <name>Ca(2+)</name>
        <dbReference type="ChEBI" id="CHEBI:29108"/>
        <label>2</label>
    </ligand>
</feature>
<feature type="binding site" evidence="3">
    <location>
        <position position="419"/>
    </location>
    <ligand>
        <name>Ca(2+)</name>
        <dbReference type="ChEBI" id="CHEBI:29108"/>
        <label>2</label>
    </ligand>
</feature>
<feature type="binding site" evidence="3">
    <location>
        <position position="421"/>
    </location>
    <ligand>
        <name>Ca(2+)</name>
        <dbReference type="ChEBI" id="CHEBI:29108"/>
        <label>2</label>
    </ligand>
</feature>
<feature type="binding site" evidence="3">
    <location>
        <position position="426"/>
    </location>
    <ligand>
        <name>Ca(2+)</name>
        <dbReference type="ChEBI" id="CHEBI:29108"/>
        <label>2</label>
    </ligand>
</feature>
<feature type="binding site" evidence="3">
    <location>
        <position position="451"/>
    </location>
    <ligand>
        <name>Ca(2+)</name>
        <dbReference type="ChEBI" id="CHEBI:29108"/>
        <label>3</label>
    </ligand>
</feature>
<feature type="binding site" evidence="3">
    <location>
        <position position="453"/>
    </location>
    <ligand>
        <name>Ca(2+)</name>
        <dbReference type="ChEBI" id="CHEBI:29108"/>
        <label>3</label>
    </ligand>
</feature>
<feature type="binding site" evidence="3">
    <location>
        <position position="455"/>
    </location>
    <ligand>
        <name>Ca(2+)</name>
        <dbReference type="ChEBI" id="CHEBI:29108"/>
        <label>3</label>
    </ligand>
</feature>
<feature type="binding site" evidence="3">
    <location>
        <position position="462"/>
    </location>
    <ligand>
        <name>Ca(2+)</name>
        <dbReference type="ChEBI" id="CHEBI:29108"/>
        <label>3</label>
    </ligand>
</feature>
<feature type="binding site" evidence="3">
    <location>
        <position position="486"/>
    </location>
    <ligand>
        <name>Ca(2+)</name>
        <dbReference type="ChEBI" id="CHEBI:29108"/>
        <label>4</label>
    </ligand>
</feature>
<feature type="binding site" evidence="3">
    <location>
        <position position="488"/>
    </location>
    <ligand>
        <name>Ca(2+)</name>
        <dbReference type="ChEBI" id="CHEBI:29108"/>
        <label>4</label>
    </ligand>
</feature>
<feature type="binding site" evidence="3">
    <location>
        <position position="490"/>
    </location>
    <ligand>
        <name>Ca(2+)</name>
        <dbReference type="ChEBI" id="CHEBI:29108"/>
        <label>4</label>
    </ligand>
</feature>
<feature type="binding site" evidence="3">
    <location>
        <position position="492"/>
    </location>
    <ligand>
        <name>Ca(2+)</name>
        <dbReference type="ChEBI" id="CHEBI:29108"/>
        <label>4</label>
    </ligand>
</feature>
<feature type="binding site" evidence="3">
    <location>
        <position position="497"/>
    </location>
    <ligand>
        <name>Ca(2+)</name>
        <dbReference type="ChEBI" id="CHEBI:29108"/>
        <label>4</label>
    </ligand>
</feature>
<sequence length="513" mass="58082">MVMAILTRQSRRKHLRVYNPPQQAAEVRYTPSATNSSAVPPVAVPPKPTADTILGKQYEDVRSVYSFGKELGRGQFGVTYLCTEIASGRQYACKSISKRKLVSKADREDIRREIQIMQHLSGQPNIVEFRGAYEDKSNVHVVMELCAGGELFDRIIAKGHYTERAAATICRAVVNVVNICHFMGVMHRDLKPENFLLATMEENAMLKATDFGLSVFIEEGKMYRDIVGSAYYVAPEVLRRSYGKEIDVWSAGVILYILLSGVPPFWAEIEKGIFDAILHEEIDFESQPWPSISESAKDLVRKMLTRDPKKRLTSAQVLQHQWLREGGEASDKPIDSAVLSRMKQFRAMNKLKKMALKVIASNLNEEEIKGLKQMFMNMDTDNSGTITYEELKAGLAKLGSKLSEAEVKQLMEAADVDGNGSIDYVEFITATMHRHKLERDEHLFKAFQYFDKDNSGFITRDELESALIEHEMGDTSTIREIISEVDTDNDGRINYEEFCAMMRGGMQQPMRLK</sequence>
<protein>
    <recommendedName>
        <fullName>Calcium-dependent protein kinase 2</fullName>
        <shortName>CDPK 2</shortName>
        <ecNumber>2.7.11.1</ecNumber>
    </recommendedName>
</protein>
<reference key="1">
    <citation type="journal article" date="1995" name="Proc. Natl. Acad. Sci. U.S.A.">
        <title>Chimeric plant calcium/calmodulin-dependent protein kinase gene with a neural visinin-like calcium-binding domain.</title>
        <authorList>
            <person name="Patil S."/>
            <person name="Takezawa D."/>
            <person name="Poovaiah B.W."/>
        </authorList>
    </citation>
    <scope>NUCLEOTIDE SEQUENCE [MRNA]</scope>
    <source>
        <strain>cv. Merit</strain>
        <tissue>Root tip</tissue>
    </source>
</reference>
<gene>
    <name type="primary">CPK2</name>
    <name type="synonym">CDPK2</name>
</gene>
<keyword id="KW-0067">ATP-binding</keyword>
<keyword id="KW-0106">Calcium</keyword>
<keyword id="KW-0418">Kinase</keyword>
<keyword id="KW-0479">Metal-binding</keyword>
<keyword id="KW-0547">Nucleotide-binding</keyword>
<keyword id="KW-0597">Phosphoprotein</keyword>
<keyword id="KW-1185">Reference proteome</keyword>
<keyword id="KW-0677">Repeat</keyword>
<keyword id="KW-0723">Serine/threonine-protein kinase</keyword>
<keyword id="KW-0808">Transferase</keyword>
<evidence type="ECO:0000250" key="1"/>
<evidence type="ECO:0000255" key="2">
    <source>
        <dbReference type="PROSITE-ProRule" id="PRU00159"/>
    </source>
</evidence>
<evidence type="ECO:0000255" key="3">
    <source>
        <dbReference type="PROSITE-ProRule" id="PRU00448"/>
    </source>
</evidence>
<evidence type="ECO:0000255" key="4">
    <source>
        <dbReference type="PROSITE-ProRule" id="PRU10027"/>
    </source>
</evidence>
<accession>P49101</accession>
<proteinExistence type="evidence at transcript level"/>
<name>CDPK2_MAIZE</name>
<organism>
    <name type="scientific">Zea mays</name>
    <name type="common">Maize</name>
    <dbReference type="NCBI Taxonomy" id="4577"/>
    <lineage>
        <taxon>Eukaryota</taxon>
        <taxon>Viridiplantae</taxon>
        <taxon>Streptophyta</taxon>
        <taxon>Embryophyta</taxon>
        <taxon>Tracheophyta</taxon>
        <taxon>Spermatophyta</taxon>
        <taxon>Magnoliopsida</taxon>
        <taxon>Liliopsida</taxon>
        <taxon>Poales</taxon>
        <taxon>Poaceae</taxon>
        <taxon>PACMAD clade</taxon>
        <taxon>Panicoideae</taxon>
        <taxon>Andropogonodae</taxon>
        <taxon>Andropogoneae</taxon>
        <taxon>Tripsacinae</taxon>
        <taxon>Zea</taxon>
    </lineage>
</organism>